<accession>B1VFY3</accession>
<protein>
    <recommendedName>
        <fullName evidence="1">ATP synthase subunit b</fullName>
    </recommendedName>
    <alternativeName>
        <fullName evidence="1">ATP synthase F(0) sector subunit b</fullName>
    </alternativeName>
    <alternativeName>
        <fullName evidence="1">ATPase subunit I</fullName>
    </alternativeName>
    <alternativeName>
        <fullName evidence="1">F-type ATPase subunit b</fullName>
        <shortName evidence="1">F-ATPase subunit b</shortName>
    </alternativeName>
</protein>
<dbReference type="EMBL" id="AM942444">
    <property type="protein sequence ID" value="CAQ04672.1"/>
    <property type="molecule type" value="Genomic_DNA"/>
</dbReference>
<dbReference type="RefSeq" id="WP_012359963.1">
    <property type="nucleotide sequence ID" value="NC_010545.1"/>
</dbReference>
<dbReference type="SMR" id="B1VFY3"/>
<dbReference type="STRING" id="504474.cu0712"/>
<dbReference type="KEGG" id="cur:cu0712"/>
<dbReference type="eggNOG" id="COG0711">
    <property type="taxonomic scope" value="Bacteria"/>
</dbReference>
<dbReference type="HOGENOM" id="CLU_079215_5_2_11"/>
<dbReference type="Proteomes" id="UP000001727">
    <property type="component" value="Chromosome"/>
</dbReference>
<dbReference type="GO" id="GO:0005886">
    <property type="term" value="C:plasma membrane"/>
    <property type="evidence" value="ECO:0007669"/>
    <property type="project" value="UniProtKB-SubCell"/>
</dbReference>
<dbReference type="GO" id="GO:0045259">
    <property type="term" value="C:proton-transporting ATP synthase complex"/>
    <property type="evidence" value="ECO:0007669"/>
    <property type="project" value="UniProtKB-KW"/>
</dbReference>
<dbReference type="GO" id="GO:0046933">
    <property type="term" value="F:proton-transporting ATP synthase activity, rotational mechanism"/>
    <property type="evidence" value="ECO:0007669"/>
    <property type="project" value="UniProtKB-UniRule"/>
</dbReference>
<dbReference type="GO" id="GO:0046961">
    <property type="term" value="F:proton-transporting ATPase activity, rotational mechanism"/>
    <property type="evidence" value="ECO:0007669"/>
    <property type="project" value="TreeGrafter"/>
</dbReference>
<dbReference type="CDD" id="cd06503">
    <property type="entry name" value="ATP-synt_Fo_b"/>
    <property type="match status" value="1"/>
</dbReference>
<dbReference type="Gene3D" id="1.20.5.620">
    <property type="entry name" value="F1F0 ATP synthase subunit B, membrane domain"/>
    <property type="match status" value="1"/>
</dbReference>
<dbReference type="HAMAP" id="MF_01398">
    <property type="entry name" value="ATP_synth_b_bprime"/>
    <property type="match status" value="1"/>
</dbReference>
<dbReference type="InterPro" id="IPR028987">
    <property type="entry name" value="ATP_synth_B-like_membr_sf"/>
</dbReference>
<dbReference type="InterPro" id="IPR002146">
    <property type="entry name" value="ATP_synth_b/b'su_bac/chlpt"/>
</dbReference>
<dbReference type="InterPro" id="IPR005864">
    <property type="entry name" value="ATP_synth_F0_bsu_bac"/>
</dbReference>
<dbReference type="InterPro" id="IPR050059">
    <property type="entry name" value="ATP_synthase_B_chain"/>
</dbReference>
<dbReference type="NCBIfam" id="TIGR01144">
    <property type="entry name" value="ATP_synt_b"/>
    <property type="match status" value="1"/>
</dbReference>
<dbReference type="NCBIfam" id="NF004412">
    <property type="entry name" value="PRK05759.1-3"/>
    <property type="match status" value="1"/>
</dbReference>
<dbReference type="PANTHER" id="PTHR33445:SF1">
    <property type="entry name" value="ATP SYNTHASE SUBUNIT B"/>
    <property type="match status" value="1"/>
</dbReference>
<dbReference type="PANTHER" id="PTHR33445">
    <property type="entry name" value="ATP SYNTHASE SUBUNIT B', CHLOROPLASTIC"/>
    <property type="match status" value="1"/>
</dbReference>
<dbReference type="Pfam" id="PF00430">
    <property type="entry name" value="ATP-synt_B"/>
    <property type="match status" value="1"/>
</dbReference>
<dbReference type="SUPFAM" id="SSF81573">
    <property type="entry name" value="F1F0 ATP synthase subunit B, membrane domain"/>
    <property type="match status" value="1"/>
</dbReference>
<comment type="function">
    <text evidence="1">F(1)F(0) ATP synthase produces ATP from ADP in the presence of a proton or sodium gradient. F-type ATPases consist of two structural domains, F(1) containing the extramembraneous catalytic core and F(0) containing the membrane proton channel, linked together by a central stalk and a peripheral stalk. During catalysis, ATP synthesis in the catalytic domain of F(1) is coupled via a rotary mechanism of the central stalk subunits to proton translocation.</text>
</comment>
<comment type="function">
    <text evidence="1">Component of the F(0) channel, it forms part of the peripheral stalk, linking F(1) to F(0).</text>
</comment>
<comment type="subunit">
    <text evidence="1">F-type ATPases have 2 components, F(1) - the catalytic core - and F(0) - the membrane proton channel. F(1) has five subunits: alpha(3), beta(3), gamma(1), delta(1), epsilon(1). F(0) has three main subunits: a(1), b(2) and c(10-14). The alpha and beta chains form an alternating ring which encloses part of the gamma chain. F(1) is attached to F(0) by a central stalk formed by the gamma and epsilon chains, while a peripheral stalk is formed by the delta and b chains.</text>
</comment>
<comment type="subcellular location">
    <subcellularLocation>
        <location evidence="1">Cell membrane</location>
        <topology evidence="1">Single-pass membrane protein</topology>
    </subcellularLocation>
</comment>
<comment type="similarity">
    <text evidence="1">Belongs to the ATPase B chain family.</text>
</comment>
<gene>
    <name evidence="1" type="primary">atpF</name>
    <name type="ordered locus">cu0712</name>
</gene>
<organism>
    <name type="scientific">Corynebacterium urealyticum (strain ATCC 43042 / DSM 7109)</name>
    <dbReference type="NCBI Taxonomy" id="504474"/>
    <lineage>
        <taxon>Bacteria</taxon>
        <taxon>Bacillati</taxon>
        <taxon>Actinomycetota</taxon>
        <taxon>Actinomycetes</taxon>
        <taxon>Mycobacteriales</taxon>
        <taxon>Corynebacteriaceae</taxon>
        <taxon>Corynebacterium</taxon>
    </lineage>
</organism>
<name>ATPF_CORU7</name>
<sequence>MTNTFFLAAETLPLEEPINPLIPPLYDIVWSIIPFAVILFVFAKVVLPKFQEVLTQREDKIEGGIQRAEAAKAEAQEALEKYNKQLAEARTEAAQIRDDARSQGQKIIADMKTQATEESNRIVEAGNKQLEANRASVVADLRKEMGENSINLAERLLGEQLNDDVKRSGTIDNFLAGLDNVGTAGK</sequence>
<reference key="1">
    <citation type="journal article" date="2008" name="J. Biotechnol.">
        <title>The lifestyle of Corynebacterium urealyticum derived from its complete genome sequence established by pyrosequencing.</title>
        <authorList>
            <person name="Tauch A."/>
            <person name="Trost E."/>
            <person name="Tilker A."/>
            <person name="Ludewig U."/>
            <person name="Schneiker S."/>
            <person name="Goesmann A."/>
            <person name="Arnold W."/>
            <person name="Bekel T."/>
            <person name="Brinkrolf K."/>
            <person name="Brune I."/>
            <person name="Goetker S."/>
            <person name="Kalinowski J."/>
            <person name="Kamp P.-B."/>
            <person name="Lobo F.P."/>
            <person name="Viehoever P."/>
            <person name="Weisshaar B."/>
            <person name="Soriano F."/>
            <person name="Droege M."/>
            <person name="Puehler A."/>
        </authorList>
    </citation>
    <scope>NUCLEOTIDE SEQUENCE [LARGE SCALE GENOMIC DNA]</scope>
    <source>
        <strain>ATCC 43042 / DSM 7109</strain>
    </source>
</reference>
<evidence type="ECO:0000255" key="1">
    <source>
        <dbReference type="HAMAP-Rule" id="MF_01398"/>
    </source>
</evidence>
<proteinExistence type="inferred from homology"/>
<feature type="chain" id="PRO_0000368441" description="ATP synthase subunit b">
    <location>
        <begin position="1"/>
        <end position="186"/>
    </location>
</feature>
<feature type="transmembrane region" description="Helical" evidence="1">
    <location>
        <begin position="28"/>
        <end position="48"/>
    </location>
</feature>
<keyword id="KW-0066">ATP synthesis</keyword>
<keyword id="KW-1003">Cell membrane</keyword>
<keyword id="KW-0138">CF(0)</keyword>
<keyword id="KW-0375">Hydrogen ion transport</keyword>
<keyword id="KW-0406">Ion transport</keyword>
<keyword id="KW-0472">Membrane</keyword>
<keyword id="KW-1185">Reference proteome</keyword>
<keyword id="KW-0812">Transmembrane</keyword>
<keyword id="KW-1133">Transmembrane helix</keyword>
<keyword id="KW-0813">Transport</keyword>